<name>DEOC_MYCS5</name>
<comment type="function">
    <text evidence="1">Catalyzes a reversible aldol reaction between acetaldehyde and D-glyceraldehyde 3-phosphate to generate 2-deoxy-D-ribose 5-phosphate.</text>
</comment>
<comment type="catalytic activity">
    <reaction evidence="1">
        <text>2-deoxy-D-ribose 5-phosphate = D-glyceraldehyde 3-phosphate + acetaldehyde</text>
        <dbReference type="Rhea" id="RHEA:12821"/>
        <dbReference type="ChEBI" id="CHEBI:15343"/>
        <dbReference type="ChEBI" id="CHEBI:59776"/>
        <dbReference type="ChEBI" id="CHEBI:62877"/>
        <dbReference type="EC" id="4.1.2.4"/>
    </reaction>
</comment>
<comment type="pathway">
    <text evidence="1">Carbohydrate degradation; 2-deoxy-D-ribose 1-phosphate degradation; D-glyceraldehyde 3-phosphate and acetaldehyde from 2-deoxy-alpha-D-ribose 1-phosphate: step 2/2.</text>
</comment>
<comment type="subcellular location">
    <subcellularLocation>
        <location evidence="1">Cytoplasm</location>
    </subcellularLocation>
</comment>
<comment type="similarity">
    <text evidence="1">Belongs to the DeoC/FbaB aldolase family. DeoC type 1 subfamily.</text>
</comment>
<protein>
    <recommendedName>
        <fullName evidence="1">Deoxyribose-phosphate aldolase</fullName>
        <shortName evidence="1">DERA</shortName>
        <ecNumber evidence="1">4.1.2.4</ecNumber>
    </recommendedName>
    <alternativeName>
        <fullName evidence="1">2-deoxy-D-ribose 5-phosphate aldolase</fullName>
    </alternativeName>
    <alternativeName>
        <fullName evidence="1">Phosphodeoxyriboaldolase</fullName>
        <shortName evidence="1">Deoxyriboaldolase</shortName>
    </alternativeName>
</protein>
<gene>
    <name evidence="1" type="primary">deoC</name>
    <name type="ordered locus">MS53_0445</name>
</gene>
<reference key="1">
    <citation type="journal article" date="2005" name="J. Bacteriol.">
        <title>Swine and poultry pathogens: the complete genome sequences of two strains of Mycoplasma hyopneumoniae and a strain of Mycoplasma synoviae.</title>
        <authorList>
            <person name="Vasconcelos A.T.R."/>
            <person name="Ferreira H.B."/>
            <person name="Bizarro C.V."/>
            <person name="Bonatto S.L."/>
            <person name="Carvalho M.O."/>
            <person name="Pinto P.M."/>
            <person name="Almeida D.F."/>
            <person name="Almeida L.G.P."/>
            <person name="Almeida R."/>
            <person name="Alves-Junior L."/>
            <person name="Assuncao E.N."/>
            <person name="Azevedo V.A.C."/>
            <person name="Bogo M.R."/>
            <person name="Brigido M.M."/>
            <person name="Brocchi M."/>
            <person name="Burity H.A."/>
            <person name="Camargo A.A."/>
            <person name="Camargo S.S."/>
            <person name="Carepo M.S."/>
            <person name="Carraro D.M."/>
            <person name="de Mattos Cascardo J.C."/>
            <person name="Castro L.A."/>
            <person name="Cavalcanti G."/>
            <person name="Chemale G."/>
            <person name="Collevatti R.G."/>
            <person name="Cunha C.W."/>
            <person name="Dallagiovanna B."/>
            <person name="Dambros B.P."/>
            <person name="Dellagostin O.A."/>
            <person name="Falcao C."/>
            <person name="Fantinatti-Garboggini F."/>
            <person name="Felipe M.S.S."/>
            <person name="Fiorentin L."/>
            <person name="Franco G.R."/>
            <person name="Freitas N.S.A."/>
            <person name="Frias D."/>
            <person name="Grangeiro T.B."/>
            <person name="Grisard E.C."/>
            <person name="Guimaraes C.T."/>
            <person name="Hungria M."/>
            <person name="Jardim S.N."/>
            <person name="Krieger M.A."/>
            <person name="Laurino J.P."/>
            <person name="Lima L.F.A."/>
            <person name="Lopes M.I."/>
            <person name="Loreto E.L.S."/>
            <person name="Madeira H.M.F."/>
            <person name="Manfio G.P."/>
            <person name="Maranhao A.Q."/>
            <person name="Martinkovics C.T."/>
            <person name="Medeiros S.R.B."/>
            <person name="Moreira M.A.M."/>
            <person name="Neiva M."/>
            <person name="Ramalho-Neto C.E."/>
            <person name="Nicolas M.F."/>
            <person name="Oliveira S.C."/>
            <person name="Paixao R.F.C."/>
            <person name="Pedrosa F.O."/>
            <person name="Pena S.D.J."/>
            <person name="Pereira M."/>
            <person name="Pereira-Ferrari L."/>
            <person name="Piffer I."/>
            <person name="Pinto L.S."/>
            <person name="Potrich D.P."/>
            <person name="Salim A.C.M."/>
            <person name="Santos F.R."/>
            <person name="Schmitt R."/>
            <person name="Schneider M.P.C."/>
            <person name="Schrank A."/>
            <person name="Schrank I.S."/>
            <person name="Schuck A.F."/>
            <person name="Seuanez H.N."/>
            <person name="Silva D.W."/>
            <person name="Silva R."/>
            <person name="Silva S.C."/>
            <person name="Soares C.M.A."/>
            <person name="Souza K.R.L."/>
            <person name="Souza R.C."/>
            <person name="Staats C.C."/>
            <person name="Steffens M.B.R."/>
            <person name="Teixeira S.M.R."/>
            <person name="Urmenyi T.P."/>
            <person name="Vainstein M.H."/>
            <person name="Zuccherato L.W."/>
            <person name="Simpson A.J.G."/>
            <person name="Zaha A."/>
        </authorList>
    </citation>
    <scope>NUCLEOTIDE SEQUENCE [LARGE SCALE GENOMIC DNA]</scope>
    <source>
        <strain>53</strain>
    </source>
</reference>
<organism>
    <name type="scientific">Mycoplasmopsis synoviae (strain 53)</name>
    <name type="common">Mycoplasma synoviae</name>
    <dbReference type="NCBI Taxonomy" id="262723"/>
    <lineage>
        <taxon>Bacteria</taxon>
        <taxon>Bacillati</taxon>
        <taxon>Mycoplasmatota</taxon>
        <taxon>Mycoplasmoidales</taxon>
        <taxon>Metamycoplasmataceae</taxon>
        <taxon>Mycoplasmopsis</taxon>
    </lineage>
</organism>
<feature type="chain" id="PRO_0000231556" description="Deoxyribose-phosphate aldolase">
    <location>
        <begin position="1"/>
        <end position="223"/>
    </location>
</feature>
<feature type="active site" description="Proton donor/acceptor" evidence="1">
    <location>
        <position position="91"/>
    </location>
</feature>
<feature type="active site" description="Schiff-base intermediate with acetaldehyde" evidence="1">
    <location>
        <position position="153"/>
    </location>
</feature>
<feature type="active site" description="Proton donor/acceptor" evidence="1">
    <location>
        <position position="183"/>
    </location>
</feature>
<accession>Q4A5W6</accession>
<sequence length="223" mass="24855">MNFNQLIDHTYLKPEATKKNIDNLIMQGFEHNFFSVCVNSIWVKYVKEKIKKLNSNLKITAVVGFPLGASITQAKAHEAKLAVEHGADEIDMVIAVGFLKQKDYEYVLNDIKSVKKAIGNKVLKIIIETALLTKEEIKKATEIVLKSGAEFIKTSTGFSYRGASLDDVVTMKSVIKDQKLEIKAAGGISTLEDMQKMHEAGATRFGLSKSVEILKNQKVETKY</sequence>
<evidence type="ECO:0000255" key="1">
    <source>
        <dbReference type="HAMAP-Rule" id="MF_00114"/>
    </source>
</evidence>
<proteinExistence type="inferred from homology"/>
<dbReference type="EC" id="4.1.2.4" evidence="1"/>
<dbReference type="EMBL" id="AE017245">
    <property type="protein sequence ID" value="AAZ43855.1"/>
    <property type="molecule type" value="Genomic_DNA"/>
</dbReference>
<dbReference type="RefSeq" id="WP_011283586.1">
    <property type="nucleotide sequence ID" value="NC_007294.1"/>
</dbReference>
<dbReference type="SMR" id="Q4A5W6"/>
<dbReference type="STRING" id="262723.MS53_0445"/>
<dbReference type="KEGG" id="msy:MS53_0445"/>
<dbReference type="eggNOG" id="COG0274">
    <property type="taxonomic scope" value="Bacteria"/>
</dbReference>
<dbReference type="HOGENOM" id="CLU_053595_0_2_14"/>
<dbReference type="OrthoDB" id="9778711at2"/>
<dbReference type="UniPathway" id="UPA00002">
    <property type="reaction ID" value="UER00468"/>
</dbReference>
<dbReference type="Proteomes" id="UP000000549">
    <property type="component" value="Chromosome"/>
</dbReference>
<dbReference type="GO" id="GO:0005737">
    <property type="term" value="C:cytoplasm"/>
    <property type="evidence" value="ECO:0007669"/>
    <property type="project" value="UniProtKB-SubCell"/>
</dbReference>
<dbReference type="GO" id="GO:0004139">
    <property type="term" value="F:deoxyribose-phosphate aldolase activity"/>
    <property type="evidence" value="ECO:0007669"/>
    <property type="project" value="UniProtKB-UniRule"/>
</dbReference>
<dbReference type="GO" id="GO:0006018">
    <property type="term" value="P:2-deoxyribose 1-phosphate catabolic process"/>
    <property type="evidence" value="ECO:0007669"/>
    <property type="project" value="UniProtKB-UniRule"/>
</dbReference>
<dbReference type="GO" id="GO:0016052">
    <property type="term" value="P:carbohydrate catabolic process"/>
    <property type="evidence" value="ECO:0007669"/>
    <property type="project" value="TreeGrafter"/>
</dbReference>
<dbReference type="GO" id="GO:0009264">
    <property type="term" value="P:deoxyribonucleotide catabolic process"/>
    <property type="evidence" value="ECO:0007669"/>
    <property type="project" value="InterPro"/>
</dbReference>
<dbReference type="CDD" id="cd00959">
    <property type="entry name" value="DeoC"/>
    <property type="match status" value="1"/>
</dbReference>
<dbReference type="FunFam" id="3.20.20.70:FF:000044">
    <property type="entry name" value="Deoxyribose-phosphate aldolase"/>
    <property type="match status" value="1"/>
</dbReference>
<dbReference type="Gene3D" id="3.20.20.70">
    <property type="entry name" value="Aldolase class I"/>
    <property type="match status" value="1"/>
</dbReference>
<dbReference type="HAMAP" id="MF_00114">
    <property type="entry name" value="DeoC_type1"/>
    <property type="match status" value="1"/>
</dbReference>
<dbReference type="InterPro" id="IPR013785">
    <property type="entry name" value="Aldolase_TIM"/>
</dbReference>
<dbReference type="InterPro" id="IPR011343">
    <property type="entry name" value="DeoC"/>
</dbReference>
<dbReference type="InterPro" id="IPR002915">
    <property type="entry name" value="DeoC/FbaB/LacD_aldolase"/>
</dbReference>
<dbReference type="InterPro" id="IPR028581">
    <property type="entry name" value="DeoC_typeI"/>
</dbReference>
<dbReference type="NCBIfam" id="TIGR00126">
    <property type="entry name" value="deoC"/>
    <property type="match status" value="1"/>
</dbReference>
<dbReference type="PANTHER" id="PTHR10889">
    <property type="entry name" value="DEOXYRIBOSE-PHOSPHATE ALDOLASE"/>
    <property type="match status" value="1"/>
</dbReference>
<dbReference type="PANTHER" id="PTHR10889:SF1">
    <property type="entry name" value="DEOXYRIBOSE-PHOSPHATE ALDOLASE"/>
    <property type="match status" value="1"/>
</dbReference>
<dbReference type="Pfam" id="PF01791">
    <property type="entry name" value="DeoC"/>
    <property type="match status" value="1"/>
</dbReference>
<dbReference type="PIRSF" id="PIRSF001357">
    <property type="entry name" value="DeoC"/>
    <property type="match status" value="1"/>
</dbReference>
<dbReference type="SMART" id="SM01133">
    <property type="entry name" value="DeoC"/>
    <property type="match status" value="1"/>
</dbReference>
<dbReference type="SUPFAM" id="SSF51569">
    <property type="entry name" value="Aldolase"/>
    <property type="match status" value="1"/>
</dbReference>
<keyword id="KW-0963">Cytoplasm</keyword>
<keyword id="KW-0456">Lyase</keyword>
<keyword id="KW-1185">Reference proteome</keyword>
<keyword id="KW-0704">Schiff base</keyword>